<reference key="1">
    <citation type="journal article" date="1999" name="Nature">
        <title>Sequence and analysis of chromosome 4 of the plant Arabidopsis thaliana.</title>
        <authorList>
            <person name="Mayer K.F.X."/>
            <person name="Schueller C."/>
            <person name="Wambutt R."/>
            <person name="Murphy G."/>
            <person name="Volckaert G."/>
            <person name="Pohl T."/>
            <person name="Duesterhoeft A."/>
            <person name="Stiekema W."/>
            <person name="Entian K.-D."/>
            <person name="Terryn N."/>
            <person name="Harris B."/>
            <person name="Ansorge W."/>
            <person name="Brandt P."/>
            <person name="Grivell L.A."/>
            <person name="Rieger M."/>
            <person name="Weichselgartner M."/>
            <person name="de Simone V."/>
            <person name="Obermaier B."/>
            <person name="Mache R."/>
            <person name="Mueller M."/>
            <person name="Kreis M."/>
            <person name="Delseny M."/>
            <person name="Puigdomenech P."/>
            <person name="Watson M."/>
            <person name="Schmidtheini T."/>
            <person name="Reichert B."/>
            <person name="Portetelle D."/>
            <person name="Perez-Alonso M."/>
            <person name="Boutry M."/>
            <person name="Bancroft I."/>
            <person name="Vos P."/>
            <person name="Hoheisel J."/>
            <person name="Zimmermann W."/>
            <person name="Wedler H."/>
            <person name="Ridley P."/>
            <person name="Langham S.-A."/>
            <person name="McCullagh B."/>
            <person name="Bilham L."/>
            <person name="Robben J."/>
            <person name="van der Schueren J."/>
            <person name="Grymonprez B."/>
            <person name="Chuang Y.-J."/>
            <person name="Vandenbussche F."/>
            <person name="Braeken M."/>
            <person name="Weltjens I."/>
            <person name="Voet M."/>
            <person name="Bastiaens I."/>
            <person name="Aert R."/>
            <person name="Defoor E."/>
            <person name="Weitzenegger T."/>
            <person name="Bothe G."/>
            <person name="Ramsperger U."/>
            <person name="Hilbert H."/>
            <person name="Braun M."/>
            <person name="Holzer E."/>
            <person name="Brandt A."/>
            <person name="Peters S."/>
            <person name="van Staveren M."/>
            <person name="Dirkse W."/>
            <person name="Mooijman P."/>
            <person name="Klein Lankhorst R."/>
            <person name="Rose M."/>
            <person name="Hauf J."/>
            <person name="Koetter P."/>
            <person name="Berneiser S."/>
            <person name="Hempel S."/>
            <person name="Feldpausch M."/>
            <person name="Lamberth S."/>
            <person name="Van den Daele H."/>
            <person name="De Keyser A."/>
            <person name="Buysshaert C."/>
            <person name="Gielen J."/>
            <person name="Villarroel R."/>
            <person name="De Clercq R."/>
            <person name="van Montagu M."/>
            <person name="Rogers J."/>
            <person name="Cronin A."/>
            <person name="Quail M.A."/>
            <person name="Bray-Allen S."/>
            <person name="Clark L."/>
            <person name="Doggett J."/>
            <person name="Hall S."/>
            <person name="Kay M."/>
            <person name="Lennard N."/>
            <person name="McLay K."/>
            <person name="Mayes R."/>
            <person name="Pettett A."/>
            <person name="Rajandream M.A."/>
            <person name="Lyne M."/>
            <person name="Benes V."/>
            <person name="Rechmann S."/>
            <person name="Borkova D."/>
            <person name="Bloecker H."/>
            <person name="Scharfe M."/>
            <person name="Grimm M."/>
            <person name="Loehnert T.-H."/>
            <person name="Dose S."/>
            <person name="de Haan M."/>
            <person name="Maarse A.C."/>
            <person name="Schaefer M."/>
            <person name="Mueller-Auer S."/>
            <person name="Gabel C."/>
            <person name="Fuchs M."/>
            <person name="Fartmann B."/>
            <person name="Granderath K."/>
            <person name="Dauner D."/>
            <person name="Herzl A."/>
            <person name="Neumann S."/>
            <person name="Argiriou A."/>
            <person name="Vitale D."/>
            <person name="Liguori R."/>
            <person name="Piravandi E."/>
            <person name="Massenet O."/>
            <person name="Quigley F."/>
            <person name="Clabauld G."/>
            <person name="Muendlein A."/>
            <person name="Felber R."/>
            <person name="Schnabl S."/>
            <person name="Hiller R."/>
            <person name="Schmidt W."/>
            <person name="Lecharny A."/>
            <person name="Aubourg S."/>
            <person name="Chefdor F."/>
            <person name="Cooke R."/>
            <person name="Berger C."/>
            <person name="Monfort A."/>
            <person name="Casacuberta E."/>
            <person name="Gibbons T."/>
            <person name="Weber N."/>
            <person name="Vandenbol M."/>
            <person name="Bargues M."/>
            <person name="Terol J."/>
            <person name="Torres A."/>
            <person name="Perez-Perez A."/>
            <person name="Purnelle B."/>
            <person name="Bent E."/>
            <person name="Johnson S."/>
            <person name="Tacon D."/>
            <person name="Jesse T."/>
            <person name="Heijnen L."/>
            <person name="Schwarz S."/>
            <person name="Scholler P."/>
            <person name="Heber S."/>
            <person name="Francs P."/>
            <person name="Bielke C."/>
            <person name="Frishman D."/>
            <person name="Haase D."/>
            <person name="Lemcke K."/>
            <person name="Mewes H.-W."/>
            <person name="Stocker S."/>
            <person name="Zaccaria P."/>
            <person name="Bevan M."/>
            <person name="Wilson R.K."/>
            <person name="de la Bastide M."/>
            <person name="Habermann K."/>
            <person name="Parnell L."/>
            <person name="Dedhia N."/>
            <person name="Gnoj L."/>
            <person name="Schutz K."/>
            <person name="Huang E."/>
            <person name="Spiegel L."/>
            <person name="Sekhon M."/>
            <person name="Murray J."/>
            <person name="Sheet P."/>
            <person name="Cordes M."/>
            <person name="Abu-Threideh J."/>
            <person name="Stoneking T."/>
            <person name="Kalicki J."/>
            <person name="Graves T."/>
            <person name="Harmon G."/>
            <person name="Edwards J."/>
            <person name="Latreille P."/>
            <person name="Courtney L."/>
            <person name="Cloud J."/>
            <person name="Abbott A."/>
            <person name="Scott K."/>
            <person name="Johnson D."/>
            <person name="Minx P."/>
            <person name="Bentley D."/>
            <person name="Fulton B."/>
            <person name="Miller N."/>
            <person name="Greco T."/>
            <person name="Kemp K."/>
            <person name="Kramer J."/>
            <person name="Fulton L."/>
            <person name="Mardis E."/>
            <person name="Dante M."/>
            <person name="Pepin K."/>
            <person name="Hillier L.W."/>
            <person name="Nelson J."/>
            <person name="Spieth J."/>
            <person name="Ryan E."/>
            <person name="Andrews S."/>
            <person name="Geisel C."/>
            <person name="Layman D."/>
            <person name="Du H."/>
            <person name="Ali J."/>
            <person name="Berghoff A."/>
            <person name="Jones K."/>
            <person name="Drone K."/>
            <person name="Cotton M."/>
            <person name="Joshu C."/>
            <person name="Antonoiu B."/>
            <person name="Zidanic M."/>
            <person name="Strong C."/>
            <person name="Sun H."/>
            <person name="Lamar B."/>
            <person name="Yordan C."/>
            <person name="Ma P."/>
            <person name="Zhong J."/>
            <person name="Preston R."/>
            <person name="Vil D."/>
            <person name="Shekher M."/>
            <person name="Matero A."/>
            <person name="Shah R."/>
            <person name="Swaby I.K."/>
            <person name="O'Shaughnessy A."/>
            <person name="Rodriguez M."/>
            <person name="Hoffman J."/>
            <person name="Till S."/>
            <person name="Granat S."/>
            <person name="Shohdy N."/>
            <person name="Hasegawa A."/>
            <person name="Hameed A."/>
            <person name="Lodhi M."/>
            <person name="Johnson A."/>
            <person name="Chen E."/>
            <person name="Marra M.A."/>
            <person name="Martienssen R."/>
            <person name="McCombie W.R."/>
        </authorList>
    </citation>
    <scope>NUCLEOTIDE SEQUENCE [LARGE SCALE GENOMIC DNA]</scope>
    <source>
        <strain>cv. Columbia</strain>
    </source>
</reference>
<reference key="2">
    <citation type="journal article" date="2017" name="Plant J.">
        <title>Araport11: a complete reannotation of the Arabidopsis thaliana reference genome.</title>
        <authorList>
            <person name="Cheng C.Y."/>
            <person name="Krishnakumar V."/>
            <person name="Chan A.P."/>
            <person name="Thibaud-Nissen F."/>
            <person name="Schobel S."/>
            <person name="Town C.D."/>
        </authorList>
    </citation>
    <scope>GENOME REANNOTATION</scope>
    <source>
        <strain>cv. Columbia</strain>
    </source>
</reference>
<reference key="3">
    <citation type="journal article" date="2003" name="Science">
        <title>Empirical analysis of transcriptional activity in the Arabidopsis genome.</title>
        <authorList>
            <person name="Yamada K."/>
            <person name="Lim J."/>
            <person name="Dale J.M."/>
            <person name="Chen H."/>
            <person name="Shinn P."/>
            <person name="Palm C.J."/>
            <person name="Southwick A.M."/>
            <person name="Wu H.C."/>
            <person name="Kim C.J."/>
            <person name="Nguyen M."/>
            <person name="Pham P.K."/>
            <person name="Cheuk R.F."/>
            <person name="Karlin-Newmann G."/>
            <person name="Liu S.X."/>
            <person name="Lam B."/>
            <person name="Sakano H."/>
            <person name="Wu T."/>
            <person name="Yu G."/>
            <person name="Miranda M."/>
            <person name="Quach H.L."/>
            <person name="Tripp M."/>
            <person name="Chang C.H."/>
            <person name="Lee J.M."/>
            <person name="Toriumi M.J."/>
            <person name="Chan M.M."/>
            <person name="Tang C.C."/>
            <person name="Onodera C.S."/>
            <person name="Deng J.M."/>
            <person name="Akiyama K."/>
            <person name="Ansari Y."/>
            <person name="Arakawa T."/>
            <person name="Banh J."/>
            <person name="Banno F."/>
            <person name="Bowser L."/>
            <person name="Brooks S.Y."/>
            <person name="Carninci P."/>
            <person name="Chao Q."/>
            <person name="Choy N."/>
            <person name="Enju A."/>
            <person name="Goldsmith A.D."/>
            <person name="Gurjal M."/>
            <person name="Hansen N.F."/>
            <person name="Hayashizaki Y."/>
            <person name="Johnson-Hopson C."/>
            <person name="Hsuan V.W."/>
            <person name="Iida K."/>
            <person name="Karnes M."/>
            <person name="Khan S."/>
            <person name="Koesema E."/>
            <person name="Ishida J."/>
            <person name="Jiang P.X."/>
            <person name="Jones T."/>
            <person name="Kawai J."/>
            <person name="Kamiya A."/>
            <person name="Meyers C."/>
            <person name="Nakajima M."/>
            <person name="Narusaka M."/>
            <person name="Seki M."/>
            <person name="Sakurai T."/>
            <person name="Satou M."/>
            <person name="Tamse R."/>
            <person name="Vaysberg M."/>
            <person name="Wallender E.K."/>
            <person name="Wong C."/>
            <person name="Yamamura Y."/>
            <person name="Yuan S."/>
            <person name="Shinozaki K."/>
            <person name="Davis R.W."/>
            <person name="Theologis A."/>
            <person name="Ecker J.R."/>
        </authorList>
    </citation>
    <scope>NUCLEOTIDE SEQUENCE [LARGE SCALE MRNA]</scope>
    <source>
        <strain>cv. Columbia</strain>
    </source>
</reference>
<reference key="4">
    <citation type="submission" date="2002-03" db="EMBL/GenBank/DDBJ databases">
        <title>Full-length cDNA from Arabidopsis thaliana.</title>
        <authorList>
            <person name="Brover V.V."/>
            <person name="Troukhan M.E."/>
            <person name="Alexandrov N.A."/>
            <person name="Lu Y.-P."/>
            <person name="Flavell R.B."/>
            <person name="Feldmann K.A."/>
        </authorList>
    </citation>
    <scope>NUCLEOTIDE SEQUENCE [LARGE SCALE MRNA]</scope>
</reference>
<evidence type="ECO:0000250" key="1">
    <source>
        <dbReference type="UniProtKB" id="P53157"/>
    </source>
</evidence>
<evidence type="ECO:0000250" key="2">
    <source>
        <dbReference type="UniProtKB" id="Q8LD38"/>
    </source>
</evidence>
<evidence type="ECO:0000255" key="3"/>
<evidence type="ECO:0000305" key="4"/>
<evidence type="ECO:0000312" key="5">
    <source>
        <dbReference type="Araport" id="AT4G22310"/>
    </source>
</evidence>
<evidence type="ECO:0000312" key="6">
    <source>
        <dbReference type="EMBL" id="CAA16781.1"/>
    </source>
</evidence>
<evidence type="ECO:0000312" key="7">
    <source>
        <dbReference type="Proteomes" id="UP000006548"/>
    </source>
</evidence>
<dbReference type="EMBL" id="AL021712">
    <property type="protein sequence ID" value="CAA16781.1"/>
    <property type="molecule type" value="Genomic_DNA"/>
</dbReference>
<dbReference type="EMBL" id="AL161557">
    <property type="protein sequence ID" value="CAB79186.1"/>
    <property type="molecule type" value="Genomic_DNA"/>
</dbReference>
<dbReference type="EMBL" id="CP002687">
    <property type="protein sequence ID" value="AEE84591.1"/>
    <property type="molecule type" value="Genomic_DNA"/>
</dbReference>
<dbReference type="EMBL" id="AF325008">
    <property type="protein sequence ID" value="AAG40360.1"/>
    <property type="molecule type" value="mRNA"/>
</dbReference>
<dbReference type="EMBL" id="AY039942">
    <property type="protein sequence ID" value="AAK64046.1"/>
    <property type="molecule type" value="mRNA"/>
</dbReference>
<dbReference type="EMBL" id="AY079382">
    <property type="protein sequence ID" value="AAL85113.1"/>
    <property type="molecule type" value="mRNA"/>
</dbReference>
<dbReference type="EMBL" id="AY087427">
    <property type="protein sequence ID" value="AAM64975.1"/>
    <property type="molecule type" value="mRNA"/>
</dbReference>
<dbReference type="PIR" id="T04912">
    <property type="entry name" value="T04912"/>
</dbReference>
<dbReference type="RefSeq" id="NP_193962.1">
    <property type="nucleotide sequence ID" value="NM_118357.6"/>
</dbReference>
<dbReference type="SMR" id="O49636"/>
<dbReference type="FunCoup" id="O49636">
    <property type="interactions" value="2403"/>
</dbReference>
<dbReference type="STRING" id="3702.O49636"/>
<dbReference type="PaxDb" id="3702-AT4G22310.1"/>
<dbReference type="ProteomicsDB" id="238268"/>
<dbReference type="DNASU" id="828326"/>
<dbReference type="EnsemblPlants" id="AT4G22310.1">
    <property type="protein sequence ID" value="AT4G22310.1"/>
    <property type="gene ID" value="AT4G22310"/>
</dbReference>
<dbReference type="GeneID" id="828326"/>
<dbReference type="Gramene" id="AT4G22310.1">
    <property type="protein sequence ID" value="AT4G22310.1"/>
    <property type="gene ID" value="AT4G22310"/>
</dbReference>
<dbReference type="KEGG" id="ath:AT4G22310"/>
<dbReference type="Araport" id="AT4G22310"/>
<dbReference type="TAIR" id="AT4G22310">
    <property type="gene designation" value="MPC3"/>
</dbReference>
<dbReference type="eggNOG" id="KOG1589">
    <property type="taxonomic scope" value="Eukaryota"/>
</dbReference>
<dbReference type="HOGENOM" id="CLU_099502_1_2_1"/>
<dbReference type="InParanoid" id="O49636"/>
<dbReference type="OMA" id="PQQFAIC"/>
<dbReference type="OrthoDB" id="869189at2759"/>
<dbReference type="PhylomeDB" id="O49636"/>
<dbReference type="PRO" id="PR:O49636"/>
<dbReference type="Proteomes" id="UP000006548">
    <property type="component" value="Chromosome 4"/>
</dbReference>
<dbReference type="ExpressionAtlas" id="O49636">
    <property type="expression patterns" value="baseline and differential"/>
</dbReference>
<dbReference type="GO" id="GO:0005829">
    <property type="term" value="C:cytosol"/>
    <property type="evidence" value="ECO:0007005"/>
    <property type="project" value="TAIR"/>
</dbReference>
<dbReference type="GO" id="GO:0005743">
    <property type="term" value="C:mitochondrial inner membrane"/>
    <property type="evidence" value="ECO:0007669"/>
    <property type="project" value="UniProtKB-SubCell"/>
</dbReference>
<dbReference type="GO" id="GO:0005739">
    <property type="term" value="C:mitochondrion"/>
    <property type="evidence" value="ECO:0007005"/>
    <property type="project" value="TAIR"/>
</dbReference>
<dbReference type="GO" id="GO:0006850">
    <property type="term" value="P:mitochondrial pyruvate transmembrane transport"/>
    <property type="evidence" value="ECO:0007669"/>
    <property type="project" value="InterPro"/>
</dbReference>
<dbReference type="InterPro" id="IPR005336">
    <property type="entry name" value="MPC"/>
</dbReference>
<dbReference type="PANTHER" id="PTHR14154">
    <property type="entry name" value="UPF0041 BRAIN PROTEIN 44-RELATED"/>
    <property type="match status" value="1"/>
</dbReference>
<dbReference type="Pfam" id="PF03650">
    <property type="entry name" value="MPC"/>
    <property type="match status" value="1"/>
</dbReference>
<accession>O49636</accession>
<accession>Q8LB46</accession>
<keyword id="KW-0472">Membrane</keyword>
<keyword id="KW-0496">Mitochondrion</keyword>
<keyword id="KW-0999">Mitochondrion inner membrane</keyword>
<keyword id="KW-1185">Reference proteome</keyword>
<keyword id="KW-0812">Transmembrane</keyword>
<keyword id="KW-1133">Transmembrane helix</keyword>
<keyword id="KW-0813">Transport</keyword>
<name>MPC4_ARATH</name>
<comment type="function">
    <text evidence="2">Mediates the uptake of pyruvate into mitochondria.</text>
</comment>
<comment type="subcellular location">
    <subcellularLocation>
        <location evidence="1">Mitochondrion inner membrane</location>
        <topology evidence="3">Multi-pass membrane protein</topology>
    </subcellularLocation>
</comment>
<comment type="similarity">
    <text evidence="4">Belongs to the mitochondrial pyruvate carrier (MPC) (TC 2.A.105) family.</text>
</comment>
<gene>
    <name evidence="4" type="primary">MPC4</name>
    <name evidence="5" type="ordered locus">At4g22310</name>
    <name evidence="6" type="ORF">T10I14_140</name>
</gene>
<organism evidence="7">
    <name type="scientific">Arabidopsis thaliana</name>
    <name type="common">Mouse-ear cress</name>
    <dbReference type="NCBI Taxonomy" id="3702"/>
    <lineage>
        <taxon>Eukaryota</taxon>
        <taxon>Viridiplantae</taxon>
        <taxon>Streptophyta</taxon>
        <taxon>Embryophyta</taxon>
        <taxon>Tracheophyta</taxon>
        <taxon>Spermatophyta</taxon>
        <taxon>Magnoliopsida</taxon>
        <taxon>eudicotyledons</taxon>
        <taxon>Gunneridae</taxon>
        <taxon>Pentapetalae</taxon>
        <taxon>rosids</taxon>
        <taxon>malvids</taxon>
        <taxon>Brassicales</taxon>
        <taxon>Brassicaceae</taxon>
        <taxon>Camelineae</taxon>
        <taxon>Arabidopsis</taxon>
    </lineage>
</organism>
<proteinExistence type="inferred from homology"/>
<protein>
    <recommendedName>
        <fullName evidence="4">Mitochondrial pyruvate carrier 4</fullName>
    </recommendedName>
</protein>
<sequence>MATSKLQAIWNHPAGPKTIHFWAPTFKWGISIANIADFAKPPEKLSYPQQIAVTCTGVIWSRYSMVINPKNWNLFSVNVAMAGTGIYQLARKIKHDYATEAEPAVASE</sequence>
<feature type="chain" id="PRO_0000431618" description="Mitochondrial pyruvate carrier 4">
    <location>
        <begin position="1"/>
        <end position="108"/>
    </location>
</feature>
<feature type="transmembrane region" description="Helical; Name=1" evidence="3">
    <location>
        <begin position="19"/>
        <end position="35"/>
    </location>
</feature>
<feature type="transmembrane region" description="Helical; Name=1" evidence="3">
    <location>
        <begin position="51"/>
        <end position="67"/>
    </location>
</feature>
<feature type="transmembrane region" description="Helical; Name=2" evidence="3">
    <location>
        <begin position="74"/>
        <end position="90"/>
    </location>
</feature>
<feature type="sequence conflict" description="In Ref. 4; AAM64975." evidence="4" ref="4">
    <original>W</original>
    <variation>S</variation>
    <location>
        <position position="72"/>
    </location>
</feature>